<feature type="chain" id="PRO_0000111464" description="Small ribosomal subunit protein uS9">
    <location>
        <begin position="1"/>
        <end position="134"/>
    </location>
</feature>
<feature type="region of interest" description="Disordered" evidence="2">
    <location>
        <begin position="114"/>
        <end position="134"/>
    </location>
</feature>
<reference key="1">
    <citation type="journal article" date="2002" name="Genome Res.">
        <title>The genome of Methanosarcina acetivorans reveals extensive metabolic and physiological diversity.</title>
        <authorList>
            <person name="Galagan J.E."/>
            <person name="Nusbaum C."/>
            <person name="Roy A."/>
            <person name="Endrizzi M.G."/>
            <person name="Macdonald P."/>
            <person name="FitzHugh W."/>
            <person name="Calvo S."/>
            <person name="Engels R."/>
            <person name="Smirnov S."/>
            <person name="Atnoor D."/>
            <person name="Brown A."/>
            <person name="Allen N."/>
            <person name="Naylor J."/>
            <person name="Stange-Thomann N."/>
            <person name="DeArellano K."/>
            <person name="Johnson R."/>
            <person name="Linton L."/>
            <person name="McEwan P."/>
            <person name="McKernan K."/>
            <person name="Talamas J."/>
            <person name="Tirrell A."/>
            <person name="Ye W."/>
            <person name="Zimmer A."/>
            <person name="Barber R.D."/>
            <person name="Cann I."/>
            <person name="Graham D.E."/>
            <person name="Grahame D.A."/>
            <person name="Guss A.M."/>
            <person name="Hedderich R."/>
            <person name="Ingram-Smith C."/>
            <person name="Kuettner H.C."/>
            <person name="Krzycki J.A."/>
            <person name="Leigh J.A."/>
            <person name="Li W."/>
            <person name="Liu J."/>
            <person name="Mukhopadhyay B."/>
            <person name="Reeve J.N."/>
            <person name="Smith K."/>
            <person name="Springer T.A."/>
            <person name="Umayam L.A."/>
            <person name="White O."/>
            <person name="White R.H."/>
            <person name="de Macario E.C."/>
            <person name="Ferry J.G."/>
            <person name="Jarrell K.F."/>
            <person name="Jing H."/>
            <person name="Macario A.J.L."/>
            <person name="Paulsen I.T."/>
            <person name="Pritchett M."/>
            <person name="Sowers K.R."/>
            <person name="Swanson R.V."/>
            <person name="Zinder S.H."/>
            <person name="Lander E."/>
            <person name="Metcalf W.W."/>
            <person name="Birren B."/>
        </authorList>
    </citation>
    <scope>NUCLEOTIDE SEQUENCE [LARGE SCALE GENOMIC DNA]</scope>
    <source>
        <strain>ATCC 35395 / DSM 2834 / JCM 12185 / C2A</strain>
    </source>
</reference>
<name>RS9_METAC</name>
<proteinExistence type="inferred from homology"/>
<organism>
    <name type="scientific">Methanosarcina acetivorans (strain ATCC 35395 / DSM 2834 / JCM 12185 / C2A)</name>
    <dbReference type="NCBI Taxonomy" id="188937"/>
    <lineage>
        <taxon>Archaea</taxon>
        <taxon>Methanobacteriati</taxon>
        <taxon>Methanobacteriota</taxon>
        <taxon>Stenosarchaea group</taxon>
        <taxon>Methanomicrobia</taxon>
        <taxon>Methanosarcinales</taxon>
        <taxon>Methanosarcinaceae</taxon>
        <taxon>Methanosarcina</taxon>
    </lineage>
</organism>
<keyword id="KW-1185">Reference proteome</keyword>
<keyword id="KW-0687">Ribonucleoprotein</keyword>
<keyword id="KW-0689">Ribosomal protein</keyword>
<accession>Q8TT42</accession>
<dbReference type="EMBL" id="AE010299">
    <property type="protein sequence ID" value="AAM04041.1"/>
    <property type="molecule type" value="Genomic_DNA"/>
</dbReference>
<dbReference type="RefSeq" id="WP_011020646.1">
    <property type="nucleotide sequence ID" value="NC_003552.1"/>
</dbReference>
<dbReference type="SMR" id="Q8TT42"/>
<dbReference type="FunCoup" id="Q8TT42">
    <property type="interactions" value="110"/>
</dbReference>
<dbReference type="STRING" id="188937.MA_0597"/>
<dbReference type="EnsemblBacteria" id="AAM04041">
    <property type="protein sequence ID" value="AAM04041"/>
    <property type="gene ID" value="MA_0597"/>
</dbReference>
<dbReference type="GeneID" id="1472489"/>
<dbReference type="KEGG" id="mac:MA_0597"/>
<dbReference type="HOGENOM" id="CLU_046483_4_0_2"/>
<dbReference type="InParanoid" id="Q8TT42"/>
<dbReference type="OrthoDB" id="52677at2157"/>
<dbReference type="PhylomeDB" id="Q8TT42"/>
<dbReference type="Proteomes" id="UP000002487">
    <property type="component" value="Chromosome"/>
</dbReference>
<dbReference type="GO" id="GO:0022627">
    <property type="term" value="C:cytosolic small ribosomal subunit"/>
    <property type="evidence" value="ECO:0000318"/>
    <property type="project" value="GO_Central"/>
</dbReference>
<dbReference type="GO" id="GO:0003723">
    <property type="term" value="F:RNA binding"/>
    <property type="evidence" value="ECO:0000318"/>
    <property type="project" value="GO_Central"/>
</dbReference>
<dbReference type="GO" id="GO:0003735">
    <property type="term" value="F:structural constituent of ribosome"/>
    <property type="evidence" value="ECO:0000318"/>
    <property type="project" value="GO_Central"/>
</dbReference>
<dbReference type="GO" id="GO:0000462">
    <property type="term" value="P:maturation of SSU-rRNA from tricistronic rRNA transcript (SSU-rRNA, 5.8S rRNA, LSU-rRNA)"/>
    <property type="evidence" value="ECO:0000318"/>
    <property type="project" value="GO_Central"/>
</dbReference>
<dbReference type="GO" id="GO:0006412">
    <property type="term" value="P:translation"/>
    <property type="evidence" value="ECO:0007669"/>
    <property type="project" value="UniProtKB-UniRule"/>
</dbReference>
<dbReference type="FunFam" id="3.30.230.10:FF:000051">
    <property type="entry name" value="30S ribosomal protein S9"/>
    <property type="match status" value="1"/>
</dbReference>
<dbReference type="Gene3D" id="3.30.230.10">
    <property type="match status" value="1"/>
</dbReference>
<dbReference type="HAMAP" id="MF_00532_A">
    <property type="entry name" value="Ribosomal_uS9_A"/>
    <property type="match status" value="1"/>
</dbReference>
<dbReference type="InterPro" id="IPR020568">
    <property type="entry name" value="Ribosomal_Su5_D2-typ_SF"/>
</dbReference>
<dbReference type="InterPro" id="IPR000754">
    <property type="entry name" value="Ribosomal_uS9"/>
</dbReference>
<dbReference type="InterPro" id="IPR019958">
    <property type="entry name" value="Ribosomal_uS9_archaeal"/>
</dbReference>
<dbReference type="InterPro" id="IPR020574">
    <property type="entry name" value="Ribosomal_uS9_CS"/>
</dbReference>
<dbReference type="InterPro" id="IPR014721">
    <property type="entry name" value="Ribsml_uS5_D2-typ_fold_subgr"/>
</dbReference>
<dbReference type="NCBIfam" id="NF001749">
    <property type="entry name" value="PRK00474.1"/>
    <property type="match status" value="1"/>
</dbReference>
<dbReference type="NCBIfam" id="TIGR03627">
    <property type="entry name" value="uS9_arch"/>
    <property type="match status" value="1"/>
</dbReference>
<dbReference type="PANTHER" id="PTHR21569:SF16">
    <property type="entry name" value="RIBOSOMAL PROTEIN S16"/>
    <property type="match status" value="1"/>
</dbReference>
<dbReference type="PANTHER" id="PTHR21569">
    <property type="entry name" value="RIBOSOMAL PROTEIN S9"/>
    <property type="match status" value="1"/>
</dbReference>
<dbReference type="Pfam" id="PF00380">
    <property type="entry name" value="Ribosomal_S9"/>
    <property type="match status" value="1"/>
</dbReference>
<dbReference type="SUPFAM" id="SSF54211">
    <property type="entry name" value="Ribosomal protein S5 domain 2-like"/>
    <property type="match status" value="1"/>
</dbReference>
<dbReference type="PROSITE" id="PS00360">
    <property type="entry name" value="RIBOSOMAL_S9"/>
    <property type="match status" value="1"/>
</dbReference>
<evidence type="ECO:0000255" key="1">
    <source>
        <dbReference type="HAMAP-Rule" id="MF_00532"/>
    </source>
</evidence>
<evidence type="ECO:0000256" key="2">
    <source>
        <dbReference type="SAM" id="MobiDB-lite"/>
    </source>
</evidence>
<evidence type="ECO:0000305" key="3"/>
<sequence length="134" mass="14491">MVKVVNSSGKHKTATARATVMKGTGKVRINKIPLELYTPELAMMKISEPLLIAGNDVVSGLDINVDVRGGGIIGQANAVRTAVARGIVEWTNDTAIRDNFAAYDRNLLVSDSRQKESKNFGGPGARAKYQKSYR</sequence>
<gene>
    <name evidence="1" type="primary">rps9</name>
    <name type="ordered locus">MA_0597</name>
</gene>
<comment type="similarity">
    <text evidence="1">Belongs to the universal ribosomal protein uS9 family.</text>
</comment>
<protein>
    <recommendedName>
        <fullName evidence="1">Small ribosomal subunit protein uS9</fullName>
    </recommendedName>
    <alternativeName>
        <fullName evidence="3">30S ribosomal protein S9</fullName>
    </alternativeName>
</protein>